<sequence>MPYEDLVRKILTEGTLKSDRTGTGTISLFGQQMRFDLSKYFPLLTTKTVFFKGLAYELLWFLKGSSNINWLLEHNVHIWDEWADENGDLGPVYGVQWRSWPAPTPEDPNRTIDQISNVLDLIKHHPDSRRMIVSAWNPAEVEKMALPPCHALFQFYVADDKLSCQLYQRSCDMFLGVPFNIASYSLLTMMMAQQAGLKPGEFVWTGGDCHVYDNHVDQFLEQLGRKPYPYPTIEIRKADSLFDYQYEDFKVVGYQHHPTIKAPVAV</sequence>
<name>TYSY_BIFLO</name>
<reference key="1">
    <citation type="journal article" date="2002" name="Proc. Natl. Acad. Sci. U.S.A.">
        <title>The genome sequence of Bifidobacterium longum reflects its adaptation to the human gastrointestinal tract.</title>
        <authorList>
            <person name="Schell M.A."/>
            <person name="Karmirantzou M."/>
            <person name="Snel B."/>
            <person name="Vilanova D."/>
            <person name="Berger B."/>
            <person name="Pessi G."/>
            <person name="Zwahlen M.-C."/>
            <person name="Desiere F."/>
            <person name="Bork P."/>
            <person name="Delley M."/>
            <person name="Pridmore R.D."/>
            <person name="Arigoni F."/>
        </authorList>
    </citation>
    <scope>NUCLEOTIDE SEQUENCE [LARGE SCALE GENOMIC DNA]</scope>
    <source>
        <strain>NCC 2705</strain>
    </source>
</reference>
<dbReference type="EC" id="2.1.1.45" evidence="1"/>
<dbReference type="EMBL" id="AE014295">
    <property type="protein sequence ID" value="AAN25452.1"/>
    <property type="molecule type" value="Genomic_DNA"/>
</dbReference>
<dbReference type="RefSeq" id="NP_696816.1">
    <property type="nucleotide sequence ID" value="NC_004307.2"/>
</dbReference>
<dbReference type="RefSeq" id="WP_007052359.1">
    <property type="nucleotide sequence ID" value="NC_004307.2"/>
</dbReference>
<dbReference type="SMR" id="Q8G3T9"/>
<dbReference type="STRING" id="206672.BL1665"/>
<dbReference type="EnsemblBacteria" id="AAN25452">
    <property type="protein sequence ID" value="AAN25452"/>
    <property type="gene ID" value="BL1665"/>
</dbReference>
<dbReference type="KEGG" id="blo:BL1665"/>
<dbReference type="PATRIC" id="fig|206672.9.peg.1720"/>
<dbReference type="HOGENOM" id="CLU_021669_0_0_11"/>
<dbReference type="OrthoDB" id="9774633at2"/>
<dbReference type="PhylomeDB" id="Q8G3T9"/>
<dbReference type="UniPathway" id="UPA00575"/>
<dbReference type="Proteomes" id="UP000000439">
    <property type="component" value="Chromosome"/>
</dbReference>
<dbReference type="GO" id="GO:0005829">
    <property type="term" value="C:cytosol"/>
    <property type="evidence" value="ECO:0007669"/>
    <property type="project" value="TreeGrafter"/>
</dbReference>
<dbReference type="GO" id="GO:0004799">
    <property type="term" value="F:thymidylate synthase activity"/>
    <property type="evidence" value="ECO:0007669"/>
    <property type="project" value="UniProtKB-UniRule"/>
</dbReference>
<dbReference type="GO" id="GO:0006231">
    <property type="term" value="P:dTMP biosynthetic process"/>
    <property type="evidence" value="ECO:0007669"/>
    <property type="project" value="UniProtKB-UniRule"/>
</dbReference>
<dbReference type="GO" id="GO:0006235">
    <property type="term" value="P:dTTP biosynthetic process"/>
    <property type="evidence" value="ECO:0007669"/>
    <property type="project" value="UniProtKB-UniRule"/>
</dbReference>
<dbReference type="GO" id="GO:0032259">
    <property type="term" value="P:methylation"/>
    <property type="evidence" value="ECO:0007669"/>
    <property type="project" value="UniProtKB-KW"/>
</dbReference>
<dbReference type="CDD" id="cd00351">
    <property type="entry name" value="TS_Pyrimidine_HMase"/>
    <property type="match status" value="1"/>
</dbReference>
<dbReference type="FunFam" id="3.30.572.10:FF:000013">
    <property type="entry name" value="Thymidylate synthase"/>
    <property type="match status" value="1"/>
</dbReference>
<dbReference type="Gene3D" id="3.30.572.10">
    <property type="entry name" value="Thymidylate synthase/dCMP hydroxymethylase domain"/>
    <property type="match status" value="1"/>
</dbReference>
<dbReference type="HAMAP" id="MF_00008">
    <property type="entry name" value="Thymidy_synth_bact"/>
    <property type="match status" value="1"/>
</dbReference>
<dbReference type="InterPro" id="IPR045097">
    <property type="entry name" value="Thymidate_synth/dCMP_Mease"/>
</dbReference>
<dbReference type="InterPro" id="IPR023451">
    <property type="entry name" value="Thymidate_synth/dCMP_Mease_dom"/>
</dbReference>
<dbReference type="InterPro" id="IPR036926">
    <property type="entry name" value="Thymidate_synth/dCMP_Mease_sf"/>
</dbReference>
<dbReference type="InterPro" id="IPR000398">
    <property type="entry name" value="Thymidylate_synthase"/>
</dbReference>
<dbReference type="InterPro" id="IPR020940">
    <property type="entry name" value="Thymidylate_synthase_AS"/>
</dbReference>
<dbReference type="NCBIfam" id="NF002497">
    <property type="entry name" value="PRK01827.1-3"/>
    <property type="match status" value="1"/>
</dbReference>
<dbReference type="NCBIfam" id="NF002499">
    <property type="entry name" value="PRK01827.1-5"/>
    <property type="match status" value="1"/>
</dbReference>
<dbReference type="NCBIfam" id="TIGR03284">
    <property type="entry name" value="thym_sym"/>
    <property type="match status" value="2"/>
</dbReference>
<dbReference type="PANTHER" id="PTHR11548">
    <property type="entry name" value="THYMIDYLATE SYNTHASE 1"/>
    <property type="match status" value="1"/>
</dbReference>
<dbReference type="PANTHER" id="PTHR11548:SF1">
    <property type="entry name" value="THYMIDYLATE SYNTHASE 1"/>
    <property type="match status" value="1"/>
</dbReference>
<dbReference type="Pfam" id="PF00303">
    <property type="entry name" value="Thymidylat_synt"/>
    <property type="match status" value="1"/>
</dbReference>
<dbReference type="PRINTS" id="PR00108">
    <property type="entry name" value="THYMDSNTHASE"/>
</dbReference>
<dbReference type="SUPFAM" id="SSF55831">
    <property type="entry name" value="Thymidylate synthase/dCMP hydroxymethylase"/>
    <property type="match status" value="1"/>
</dbReference>
<dbReference type="PROSITE" id="PS00091">
    <property type="entry name" value="THYMIDYLATE_SYNTHASE"/>
    <property type="match status" value="1"/>
</dbReference>
<organism>
    <name type="scientific">Bifidobacterium longum (strain NCC 2705)</name>
    <dbReference type="NCBI Taxonomy" id="206672"/>
    <lineage>
        <taxon>Bacteria</taxon>
        <taxon>Bacillati</taxon>
        <taxon>Actinomycetota</taxon>
        <taxon>Actinomycetes</taxon>
        <taxon>Bifidobacteriales</taxon>
        <taxon>Bifidobacteriaceae</taxon>
        <taxon>Bifidobacterium</taxon>
    </lineage>
</organism>
<evidence type="ECO:0000255" key="1">
    <source>
        <dbReference type="HAMAP-Rule" id="MF_00008"/>
    </source>
</evidence>
<accession>Q8G3T9</accession>
<keyword id="KW-0963">Cytoplasm</keyword>
<keyword id="KW-0489">Methyltransferase</keyword>
<keyword id="KW-0545">Nucleotide biosynthesis</keyword>
<keyword id="KW-1185">Reference proteome</keyword>
<keyword id="KW-0808">Transferase</keyword>
<gene>
    <name evidence="1" type="primary">thyA</name>
    <name type="ordered locus">BL1665</name>
</gene>
<protein>
    <recommendedName>
        <fullName evidence="1">Thymidylate synthase</fullName>
        <shortName evidence="1">TS</shortName>
        <shortName evidence="1">TSase</shortName>
        <ecNumber evidence="1">2.1.1.45</ecNumber>
    </recommendedName>
</protein>
<comment type="function">
    <text evidence="1">Catalyzes the reductive methylation of 2'-deoxyuridine-5'-monophosphate (dUMP) to 2'-deoxythymidine-5'-monophosphate (dTMP) while utilizing 5,10-methylenetetrahydrofolate (mTHF) as the methyl donor and reductant in the reaction, yielding dihydrofolate (DHF) as a by-product. This enzymatic reaction provides an intracellular de novo source of dTMP, an essential precursor for DNA biosynthesis.</text>
</comment>
<comment type="catalytic activity">
    <reaction evidence="1">
        <text>dUMP + (6R)-5,10-methylene-5,6,7,8-tetrahydrofolate = 7,8-dihydrofolate + dTMP</text>
        <dbReference type="Rhea" id="RHEA:12104"/>
        <dbReference type="ChEBI" id="CHEBI:15636"/>
        <dbReference type="ChEBI" id="CHEBI:57451"/>
        <dbReference type="ChEBI" id="CHEBI:63528"/>
        <dbReference type="ChEBI" id="CHEBI:246422"/>
        <dbReference type="EC" id="2.1.1.45"/>
    </reaction>
</comment>
<comment type="pathway">
    <text evidence="1">Pyrimidine metabolism; dTTP biosynthesis.</text>
</comment>
<comment type="subunit">
    <text evidence="1">Homodimer.</text>
</comment>
<comment type="subcellular location">
    <subcellularLocation>
        <location evidence="1">Cytoplasm</location>
    </subcellularLocation>
</comment>
<comment type="similarity">
    <text evidence="1">Belongs to the thymidylate synthase family. Bacterial-type ThyA subfamily.</text>
</comment>
<feature type="chain" id="PRO_0000140937" description="Thymidylate synthase">
    <location>
        <begin position="1"/>
        <end position="266"/>
    </location>
</feature>
<feature type="active site" description="Nucleophile" evidence="1">
    <location>
        <position position="149"/>
    </location>
</feature>
<feature type="binding site" description="in other chain" evidence="1">
    <location>
        <position position="20"/>
    </location>
    <ligand>
        <name>dUMP</name>
        <dbReference type="ChEBI" id="CHEBI:246422"/>
        <note>ligand shared between dimeric partners</note>
    </ligand>
</feature>
<feature type="binding site" evidence="1">
    <location>
        <begin position="129"/>
        <end position="130"/>
    </location>
    <ligand>
        <name>dUMP</name>
        <dbReference type="ChEBI" id="CHEBI:246422"/>
        <note>ligand shared between dimeric partners</note>
    </ligand>
</feature>
<feature type="binding site" description="in other chain" evidence="1">
    <location>
        <begin position="169"/>
        <end position="172"/>
    </location>
    <ligand>
        <name>dUMP</name>
        <dbReference type="ChEBI" id="CHEBI:246422"/>
        <note>ligand shared between dimeric partners</note>
    </ligand>
</feature>
<feature type="binding site" evidence="1">
    <location>
        <position position="172"/>
    </location>
    <ligand>
        <name>(6R)-5,10-methylene-5,6,7,8-tetrahydrofolate</name>
        <dbReference type="ChEBI" id="CHEBI:15636"/>
    </ligand>
</feature>
<feature type="binding site" description="in other chain" evidence="1">
    <location>
        <position position="180"/>
    </location>
    <ligand>
        <name>dUMP</name>
        <dbReference type="ChEBI" id="CHEBI:246422"/>
        <note>ligand shared between dimeric partners</note>
    </ligand>
</feature>
<feature type="binding site" description="in other chain" evidence="1">
    <location>
        <begin position="210"/>
        <end position="212"/>
    </location>
    <ligand>
        <name>dUMP</name>
        <dbReference type="ChEBI" id="CHEBI:246422"/>
        <note>ligand shared between dimeric partners</note>
    </ligand>
</feature>
<feature type="binding site" evidence="1">
    <location>
        <position position="265"/>
    </location>
    <ligand>
        <name>(6R)-5,10-methylene-5,6,7,8-tetrahydrofolate</name>
        <dbReference type="ChEBI" id="CHEBI:15636"/>
    </ligand>
</feature>
<proteinExistence type="inferred from homology"/>